<organism>
    <name type="scientific">Bacillus subtilis (strain 168)</name>
    <dbReference type="NCBI Taxonomy" id="224308"/>
    <lineage>
        <taxon>Bacteria</taxon>
        <taxon>Bacillati</taxon>
        <taxon>Bacillota</taxon>
        <taxon>Bacilli</taxon>
        <taxon>Bacillales</taxon>
        <taxon>Bacillaceae</taxon>
        <taxon>Bacillus</taxon>
    </lineage>
</organism>
<keyword id="KW-0010">Activator</keyword>
<keyword id="KW-0028">Amino-acid biosynthesis</keyword>
<keyword id="KW-0238">DNA-binding</keyword>
<keyword id="KW-0314">Glutamate biosynthesis</keyword>
<keyword id="KW-1185">Reference proteome</keyword>
<keyword id="KW-0678">Repressor</keyword>
<keyword id="KW-0804">Transcription</keyword>
<keyword id="KW-0805">Transcription regulation</keyword>
<gene>
    <name type="primary">gltC</name>
    <name type="ordered locus">BSU18460</name>
</gene>
<evidence type="ECO:0000255" key="1">
    <source>
        <dbReference type="PROSITE-ProRule" id="PRU00253"/>
    </source>
</evidence>
<evidence type="ECO:0000269" key="2">
    <source>
    </source>
</evidence>
<evidence type="ECO:0000269" key="3">
    <source>
    </source>
</evidence>
<evidence type="ECO:0000305" key="4"/>
<protein>
    <recommendedName>
        <fullName>Transcriptional dual regulator GltC</fullName>
    </recommendedName>
    <alternativeName>
        <fullName>HTH-type transcriptional regulator GltC</fullName>
    </alternativeName>
</protein>
<feature type="chain" id="PRO_0000105629" description="Transcriptional dual regulator GltC">
    <location>
        <begin position="1"/>
        <end position="300"/>
    </location>
</feature>
<feature type="domain" description="HTH lysR-type" evidence="1">
    <location>
        <begin position="1"/>
        <end position="58"/>
    </location>
</feature>
<feature type="DNA-binding region" description="H-T-H motif" evidence="1">
    <location>
        <begin position="18"/>
        <end position="37"/>
    </location>
</feature>
<feature type="sequence conflict" description="In Ref. 1; AAA16437." evidence="4" ref="1">
    <original>EL</original>
    <variation>DV</variation>
    <location>
        <begin position="2"/>
        <end position="3"/>
    </location>
</feature>
<sequence length="300" mass="34047">MELRQLRYFMEVAEREHVSEAADHLHVAQSAISRQIANLEEELNVTLFEREGRNIKLTPIGKEFLIHVKTAMKAIDYAKEQIDEYLDPHRGTVKIGFPTSLASQLLPTVISAFKEEYPHVEFLLRQGSYKFLIEAVRNRDIDLALLGPVPTNFSDITGKILFTEKIYALVPLNHPLAKQKTVHLIDLRNDQFVLFPEGFVLREMAIDTCKQAGFAPLVSTEGEDLDAIKGLVSAGMGVTLLPESTFAETTPRFTVKIPIEFPQVKRTVGIIKPKNRELAPSANDFYEFVIQFFSKLEQYQ</sequence>
<accession>P20668</accession>
<dbReference type="EMBL" id="M28509">
    <property type="protein sequence ID" value="AAA16437.1"/>
    <property type="molecule type" value="Unassigned_DNA"/>
</dbReference>
<dbReference type="EMBL" id="AL009126">
    <property type="protein sequence ID" value="CAB13729.2"/>
    <property type="molecule type" value="Genomic_DNA"/>
</dbReference>
<dbReference type="EMBL" id="AF006720">
    <property type="protein sequence ID" value="AAB62699.1"/>
    <property type="molecule type" value="Genomic_DNA"/>
</dbReference>
<dbReference type="PIR" id="A69635">
    <property type="entry name" value="A69635"/>
</dbReference>
<dbReference type="RefSeq" id="NP_389728.2">
    <property type="nucleotide sequence ID" value="NC_000964.3"/>
</dbReference>
<dbReference type="RefSeq" id="WP_004399246.1">
    <property type="nucleotide sequence ID" value="NZ_OZ025638.1"/>
</dbReference>
<dbReference type="SMR" id="P20668"/>
<dbReference type="FunCoup" id="P20668">
    <property type="interactions" value="44"/>
</dbReference>
<dbReference type="IntAct" id="P20668">
    <property type="interactions" value="1"/>
</dbReference>
<dbReference type="STRING" id="224308.BSU18460"/>
<dbReference type="PaxDb" id="224308-BSU18460"/>
<dbReference type="EnsemblBacteria" id="CAB13729">
    <property type="protein sequence ID" value="CAB13729"/>
    <property type="gene ID" value="BSU_18460"/>
</dbReference>
<dbReference type="GeneID" id="940104"/>
<dbReference type="KEGG" id="bsu:BSU18460"/>
<dbReference type="PATRIC" id="fig|224308.179.peg.2013"/>
<dbReference type="eggNOG" id="COG0583">
    <property type="taxonomic scope" value="Bacteria"/>
</dbReference>
<dbReference type="InParanoid" id="P20668"/>
<dbReference type="OrthoDB" id="9803735at2"/>
<dbReference type="PhylomeDB" id="P20668"/>
<dbReference type="BioCyc" id="BSUB:BSU18460-MONOMER"/>
<dbReference type="Proteomes" id="UP000001570">
    <property type="component" value="Chromosome"/>
</dbReference>
<dbReference type="GO" id="GO:0032993">
    <property type="term" value="C:protein-DNA complex"/>
    <property type="evidence" value="ECO:0000318"/>
    <property type="project" value="GO_Central"/>
</dbReference>
<dbReference type="GO" id="GO:0003677">
    <property type="term" value="F:DNA binding"/>
    <property type="evidence" value="ECO:0007669"/>
    <property type="project" value="UniProtKB-KW"/>
</dbReference>
<dbReference type="GO" id="GO:0003700">
    <property type="term" value="F:DNA-binding transcription factor activity"/>
    <property type="evidence" value="ECO:0000315"/>
    <property type="project" value="UniProtKB"/>
</dbReference>
<dbReference type="GO" id="GO:0006537">
    <property type="term" value="P:glutamate biosynthetic process"/>
    <property type="evidence" value="ECO:0007669"/>
    <property type="project" value="UniProtKB-KW"/>
</dbReference>
<dbReference type="GO" id="GO:0006355">
    <property type="term" value="P:regulation of DNA-templated transcription"/>
    <property type="evidence" value="ECO:0000315"/>
    <property type="project" value="UniProtKB"/>
</dbReference>
<dbReference type="CDD" id="cd08434">
    <property type="entry name" value="PBP2_GltC_like"/>
    <property type="match status" value="1"/>
</dbReference>
<dbReference type="FunFam" id="1.10.10.10:FF:000001">
    <property type="entry name" value="LysR family transcriptional regulator"/>
    <property type="match status" value="1"/>
</dbReference>
<dbReference type="Gene3D" id="3.40.190.290">
    <property type="match status" value="1"/>
</dbReference>
<dbReference type="Gene3D" id="1.10.10.10">
    <property type="entry name" value="Winged helix-like DNA-binding domain superfamily/Winged helix DNA-binding domain"/>
    <property type="match status" value="1"/>
</dbReference>
<dbReference type="InterPro" id="IPR005119">
    <property type="entry name" value="LysR_subst-bd"/>
</dbReference>
<dbReference type="InterPro" id="IPR000847">
    <property type="entry name" value="Tscrpt_reg_HTH_LysR"/>
</dbReference>
<dbReference type="InterPro" id="IPR036388">
    <property type="entry name" value="WH-like_DNA-bd_sf"/>
</dbReference>
<dbReference type="InterPro" id="IPR036390">
    <property type="entry name" value="WH_DNA-bd_sf"/>
</dbReference>
<dbReference type="PANTHER" id="PTHR30346:SF28">
    <property type="entry name" value="HTH-TYPE TRANSCRIPTIONAL REGULATOR CYNR"/>
    <property type="match status" value="1"/>
</dbReference>
<dbReference type="PANTHER" id="PTHR30346">
    <property type="entry name" value="TRANSCRIPTIONAL DUAL REGULATOR HCAR-RELATED"/>
    <property type="match status" value="1"/>
</dbReference>
<dbReference type="Pfam" id="PF00126">
    <property type="entry name" value="HTH_1"/>
    <property type="match status" value="1"/>
</dbReference>
<dbReference type="Pfam" id="PF03466">
    <property type="entry name" value="LysR_substrate"/>
    <property type="match status" value="1"/>
</dbReference>
<dbReference type="PRINTS" id="PR00039">
    <property type="entry name" value="HTHLYSR"/>
</dbReference>
<dbReference type="SUPFAM" id="SSF53850">
    <property type="entry name" value="Periplasmic binding protein-like II"/>
    <property type="match status" value="1"/>
</dbReference>
<dbReference type="SUPFAM" id="SSF46785">
    <property type="entry name" value="Winged helix' DNA-binding domain"/>
    <property type="match status" value="1"/>
</dbReference>
<dbReference type="PROSITE" id="PS50931">
    <property type="entry name" value="HTH_LYSR"/>
    <property type="match status" value="1"/>
</dbReference>
<proteinExistence type="evidence at protein level"/>
<reference key="1">
    <citation type="journal article" date="1989" name="J. Bacteriol.">
        <title>Positive regulation of glutamate biosynthesis in Bacillus subtilis.</title>
        <authorList>
            <person name="Bohannon D.E."/>
            <person name="Sonenshein A.L."/>
        </authorList>
    </citation>
    <scope>NUCLEOTIDE SEQUENCE [GENOMIC DNA]</scope>
</reference>
<reference key="2">
    <citation type="submission" date="1994-02" db="EMBL/GenBank/DDBJ databases">
        <authorList>
            <person name="Sonenshein A.L."/>
        </authorList>
    </citation>
    <scope>SEQUENCE REVISION</scope>
</reference>
<reference key="3">
    <citation type="journal article" date="1997" name="Nature">
        <title>The complete genome sequence of the Gram-positive bacterium Bacillus subtilis.</title>
        <authorList>
            <person name="Kunst F."/>
            <person name="Ogasawara N."/>
            <person name="Moszer I."/>
            <person name="Albertini A.M."/>
            <person name="Alloni G."/>
            <person name="Azevedo V."/>
            <person name="Bertero M.G."/>
            <person name="Bessieres P."/>
            <person name="Bolotin A."/>
            <person name="Borchert S."/>
            <person name="Borriss R."/>
            <person name="Boursier L."/>
            <person name="Brans A."/>
            <person name="Braun M."/>
            <person name="Brignell S.C."/>
            <person name="Bron S."/>
            <person name="Brouillet S."/>
            <person name="Bruschi C.V."/>
            <person name="Caldwell B."/>
            <person name="Capuano V."/>
            <person name="Carter N.M."/>
            <person name="Choi S.-K."/>
            <person name="Codani J.-J."/>
            <person name="Connerton I.F."/>
            <person name="Cummings N.J."/>
            <person name="Daniel R.A."/>
            <person name="Denizot F."/>
            <person name="Devine K.M."/>
            <person name="Duesterhoeft A."/>
            <person name="Ehrlich S.D."/>
            <person name="Emmerson P.T."/>
            <person name="Entian K.-D."/>
            <person name="Errington J."/>
            <person name="Fabret C."/>
            <person name="Ferrari E."/>
            <person name="Foulger D."/>
            <person name="Fritz C."/>
            <person name="Fujita M."/>
            <person name="Fujita Y."/>
            <person name="Fuma S."/>
            <person name="Galizzi A."/>
            <person name="Galleron N."/>
            <person name="Ghim S.-Y."/>
            <person name="Glaser P."/>
            <person name="Goffeau A."/>
            <person name="Golightly E.J."/>
            <person name="Grandi G."/>
            <person name="Guiseppi G."/>
            <person name="Guy B.J."/>
            <person name="Haga K."/>
            <person name="Haiech J."/>
            <person name="Harwood C.R."/>
            <person name="Henaut A."/>
            <person name="Hilbert H."/>
            <person name="Holsappel S."/>
            <person name="Hosono S."/>
            <person name="Hullo M.-F."/>
            <person name="Itaya M."/>
            <person name="Jones L.-M."/>
            <person name="Joris B."/>
            <person name="Karamata D."/>
            <person name="Kasahara Y."/>
            <person name="Klaerr-Blanchard M."/>
            <person name="Klein C."/>
            <person name="Kobayashi Y."/>
            <person name="Koetter P."/>
            <person name="Koningstein G."/>
            <person name="Krogh S."/>
            <person name="Kumano M."/>
            <person name="Kurita K."/>
            <person name="Lapidus A."/>
            <person name="Lardinois S."/>
            <person name="Lauber J."/>
            <person name="Lazarevic V."/>
            <person name="Lee S.-M."/>
            <person name="Levine A."/>
            <person name="Liu H."/>
            <person name="Masuda S."/>
            <person name="Mauel C."/>
            <person name="Medigue C."/>
            <person name="Medina N."/>
            <person name="Mellado R.P."/>
            <person name="Mizuno M."/>
            <person name="Moestl D."/>
            <person name="Nakai S."/>
            <person name="Noback M."/>
            <person name="Noone D."/>
            <person name="O'Reilly M."/>
            <person name="Ogawa K."/>
            <person name="Ogiwara A."/>
            <person name="Oudega B."/>
            <person name="Park S.-H."/>
            <person name="Parro V."/>
            <person name="Pohl T.M."/>
            <person name="Portetelle D."/>
            <person name="Porwollik S."/>
            <person name="Prescott A.M."/>
            <person name="Presecan E."/>
            <person name="Pujic P."/>
            <person name="Purnelle B."/>
            <person name="Rapoport G."/>
            <person name="Rey M."/>
            <person name="Reynolds S."/>
            <person name="Rieger M."/>
            <person name="Rivolta C."/>
            <person name="Rocha E."/>
            <person name="Roche B."/>
            <person name="Rose M."/>
            <person name="Sadaie Y."/>
            <person name="Sato T."/>
            <person name="Scanlan E."/>
            <person name="Schleich S."/>
            <person name="Schroeter R."/>
            <person name="Scoffone F."/>
            <person name="Sekiguchi J."/>
            <person name="Sekowska A."/>
            <person name="Seror S.J."/>
            <person name="Serror P."/>
            <person name="Shin B.-S."/>
            <person name="Soldo B."/>
            <person name="Sorokin A."/>
            <person name="Tacconi E."/>
            <person name="Takagi T."/>
            <person name="Takahashi H."/>
            <person name="Takemaru K."/>
            <person name="Takeuchi M."/>
            <person name="Tamakoshi A."/>
            <person name="Tanaka T."/>
            <person name="Terpstra P."/>
            <person name="Tognoni A."/>
            <person name="Tosato V."/>
            <person name="Uchiyama S."/>
            <person name="Vandenbol M."/>
            <person name="Vannier F."/>
            <person name="Vassarotti A."/>
            <person name="Viari A."/>
            <person name="Wambutt R."/>
            <person name="Wedler E."/>
            <person name="Wedler H."/>
            <person name="Weitzenegger T."/>
            <person name="Winters P."/>
            <person name="Wipat A."/>
            <person name="Yamamoto H."/>
            <person name="Yamane K."/>
            <person name="Yasumoto K."/>
            <person name="Yata K."/>
            <person name="Yoshida K."/>
            <person name="Yoshikawa H.-F."/>
            <person name="Zumstein E."/>
            <person name="Yoshikawa H."/>
            <person name="Danchin A."/>
        </authorList>
    </citation>
    <scope>NUCLEOTIDE SEQUENCE [LARGE SCALE GENOMIC DNA]</scope>
    <source>
        <strain>168</strain>
    </source>
</reference>
<reference key="4">
    <citation type="journal article" date="2009" name="Microbiology">
        <title>From a consortium sequence to a unified sequence: the Bacillus subtilis 168 reference genome a decade later.</title>
        <authorList>
            <person name="Barbe V."/>
            <person name="Cruveiller S."/>
            <person name="Kunst F."/>
            <person name="Lenoble P."/>
            <person name="Meurice G."/>
            <person name="Sekowska A."/>
            <person name="Vallenet D."/>
            <person name="Wang T."/>
            <person name="Moszer I."/>
            <person name="Medigue C."/>
            <person name="Danchin A."/>
        </authorList>
    </citation>
    <scope>SEQUENCE REVISION TO 2-3</scope>
</reference>
<reference key="5">
    <citation type="submission" date="1997-06" db="EMBL/GenBank/DDBJ databases">
        <title>The salt-inducible proHJ operon involved in proline biosynthesis in Bacillus subtilis.</title>
        <authorList>
            <person name="Belitsky B.R."/>
            <person name="Sonenshein A.L."/>
        </authorList>
    </citation>
    <scope>NUCLEOTIDE SEQUENCE [GENOMIC DNA] OF 284-300</scope>
    <source>
        <strain>168 / SMY</strain>
    </source>
</reference>
<reference key="6">
    <citation type="journal article" date="2007" name="J. Mol. Biol.">
        <title>Molecular mechanism of the regulation of Bacillus subtilis gltAB expression by GltC.</title>
        <authorList>
            <person name="Picossi S."/>
            <person name="Belitsky B.R."/>
            <person name="Sonenshein A.L."/>
        </authorList>
    </citation>
    <scope>FUNCTION IN THE GLTAB OPERON EXPRESSION</scope>
</reference>
<reference key="7">
    <citation type="journal article" date="2007" name="Mol. Microbiol.">
        <title>A regulatory protein-protein interaction governs glutamate biosynthesis in Bacillus subtilis: the glutamate dehydrogenase RocG moonlights in controlling the transcription factor GltC.</title>
        <authorList>
            <person name="Commichau F.M."/>
            <person name="Herzberg C."/>
            <person name="Tripal P."/>
            <person name="Valerius O."/>
            <person name="Stulke J."/>
        </authorList>
    </citation>
    <scope>INHIBITORY INTERACTION WITH ROCG</scope>
    <scope>ACTIVITY REGULATION</scope>
    <scope>SUBUNIT</scope>
    <scope>INDUCTION</scope>
</reference>
<comment type="function">
    <text evidence="2">Positive regulator of glutamate biosynthesis (gltAB genes). Negatively regulates its own expression.</text>
</comment>
<comment type="activity regulation">
    <text evidence="3">Activated by alpha-ketoglutarate and inhibited by glutamate and by RocG.</text>
</comment>
<comment type="subunit">
    <text evidence="3">Interacts with gutamate dehydrogenase RocG.</text>
</comment>
<comment type="interaction">
    <interactant intactId="EBI-1642006">
        <id>P20668</id>
    </interactant>
    <interactant intactId="EBI-1642022">
        <id>P39633</id>
        <label>rocG</label>
    </interactant>
    <organismsDiffer>false</organismsDiffer>
    <experiments>2</experiments>
</comment>
<comment type="induction">
    <text evidence="3">Induced by glucose, repressed by arginine, less protein accumulates when grown in the presence of glucose and arginine (at protein level).</text>
</comment>
<comment type="similarity">
    <text evidence="4">Belongs to the LysR transcriptional regulatory family.</text>
</comment>
<name>GLTC_BACSU</name>